<sequence length="134" mass="14482">MKSVFTISASLAISLMLCCTAQANDHKLLGAIAMPRNETNDLALKLPVCRIVKRIQLSADHGDLQLSGASVYFKAARSASQSLNIPSEIKEGQTTDWININSDNDNKRCVSKITFSGHTVNSSDMATLKIIGDD</sequence>
<reference key="1">
    <citation type="journal article" date="2009" name="J. Bacteriol.">
        <title>Genomic sequencing reveals regulatory mutations and recombinational events in the widely used MC4100 lineage of Escherichia coli K-12.</title>
        <authorList>
            <person name="Ferenci T."/>
            <person name="Zhou Z."/>
            <person name="Betteridge T."/>
            <person name="Ren Y."/>
            <person name="Liu Y."/>
            <person name="Feng L."/>
            <person name="Reeves P.R."/>
            <person name="Wang L."/>
        </authorList>
    </citation>
    <scope>NUCLEOTIDE SEQUENCE [LARGE SCALE GENOMIC DNA]</scope>
    <source>
        <strain>K12 / MC4100 / BW2952</strain>
    </source>
</reference>
<protein>
    <recommendedName>
        <fullName evidence="1">UPF0412 protein YaaI</fullName>
    </recommendedName>
</protein>
<proteinExistence type="inferred from homology"/>
<name>YAAI_ECOBW</name>
<dbReference type="EMBL" id="CP001396">
    <property type="protein sequence ID" value="ACR64841.1"/>
    <property type="molecule type" value="Genomic_DNA"/>
</dbReference>
<dbReference type="RefSeq" id="WP_000843565.1">
    <property type="nucleotide sequence ID" value="NC_012759.1"/>
</dbReference>
<dbReference type="KEGG" id="ebw:BWG_0012"/>
<dbReference type="HOGENOM" id="CLU_158661_0_0_6"/>
<dbReference type="HAMAP" id="MF_01372">
    <property type="entry name" value="UPF0412"/>
    <property type="match status" value="1"/>
</dbReference>
<dbReference type="InterPro" id="IPR020240">
    <property type="entry name" value="UPF0412_YaaI"/>
</dbReference>
<dbReference type="NCBIfam" id="NF007541">
    <property type="entry name" value="PRK10154.1"/>
    <property type="match status" value="1"/>
</dbReference>
<dbReference type="Pfam" id="PF10807">
    <property type="entry name" value="DUF2541"/>
    <property type="match status" value="1"/>
</dbReference>
<evidence type="ECO:0000255" key="1">
    <source>
        <dbReference type="HAMAP-Rule" id="MF_01372"/>
    </source>
</evidence>
<organism>
    <name type="scientific">Escherichia coli (strain K12 / MC4100 / BW2952)</name>
    <dbReference type="NCBI Taxonomy" id="595496"/>
    <lineage>
        <taxon>Bacteria</taxon>
        <taxon>Pseudomonadati</taxon>
        <taxon>Pseudomonadota</taxon>
        <taxon>Gammaproteobacteria</taxon>
        <taxon>Enterobacterales</taxon>
        <taxon>Enterobacteriaceae</taxon>
        <taxon>Escherichia</taxon>
    </lineage>
</organism>
<accession>C4ZPT9</accession>
<comment type="similarity">
    <text evidence="1">Belongs to the UPF0412 family.</text>
</comment>
<keyword id="KW-0732">Signal</keyword>
<feature type="signal peptide" evidence="1">
    <location>
        <begin position="1"/>
        <end position="23"/>
    </location>
</feature>
<feature type="chain" id="PRO_1000215082" description="UPF0412 protein YaaI">
    <location>
        <begin position="24"/>
        <end position="134"/>
    </location>
</feature>
<gene>
    <name evidence="1" type="primary">yaaI</name>
    <name type="ordered locus">BWG_0012</name>
</gene>